<comment type="function">
    <text evidence="1">Carrier of the growing fatty acid chain in fatty acid biosynthesis.</text>
</comment>
<comment type="pathway">
    <text evidence="1">Lipid metabolism; fatty acid biosynthesis.</text>
</comment>
<comment type="subcellular location">
    <subcellularLocation>
        <location evidence="1">Cytoplasm</location>
    </subcellularLocation>
</comment>
<comment type="PTM">
    <text evidence="1">4'-phosphopantetheine is transferred from CoA to a specific serine of apo-ACP by AcpS. This modification is essential for activity because fatty acids are bound in thioester linkage to the sulfhydryl of the prosthetic group.</text>
</comment>
<comment type="similarity">
    <text evidence="1">Belongs to the acyl carrier protein (ACP) family.</text>
</comment>
<name>ACP_CHESB</name>
<sequence length="78" mass="8416">MSDTAERVKKIVVEHLGVDADKVTEQASFIDDLGADSLDTVELVMAFEEEFGVEIPDDAAETILTVGDAVKYIEKATA</sequence>
<dbReference type="EMBL" id="CP000390">
    <property type="protein sequence ID" value="ABG63161.1"/>
    <property type="molecule type" value="Genomic_DNA"/>
</dbReference>
<dbReference type="SMR" id="Q11HG4"/>
<dbReference type="STRING" id="266779.Meso_1767"/>
<dbReference type="KEGG" id="mes:Meso_1767"/>
<dbReference type="eggNOG" id="COG0236">
    <property type="taxonomic scope" value="Bacteria"/>
</dbReference>
<dbReference type="HOGENOM" id="CLU_108696_5_1_5"/>
<dbReference type="OrthoDB" id="9804551at2"/>
<dbReference type="UniPathway" id="UPA00094"/>
<dbReference type="GO" id="GO:0005829">
    <property type="term" value="C:cytosol"/>
    <property type="evidence" value="ECO:0007669"/>
    <property type="project" value="TreeGrafter"/>
</dbReference>
<dbReference type="GO" id="GO:0016020">
    <property type="term" value="C:membrane"/>
    <property type="evidence" value="ECO:0007669"/>
    <property type="project" value="GOC"/>
</dbReference>
<dbReference type="GO" id="GO:0000035">
    <property type="term" value="F:acyl binding"/>
    <property type="evidence" value="ECO:0007669"/>
    <property type="project" value="TreeGrafter"/>
</dbReference>
<dbReference type="GO" id="GO:0000036">
    <property type="term" value="F:acyl carrier activity"/>
    <property type="evidence" value="ECO:0007669"/>
    <property type="project" value="UniProtKB-UniRule"/>
</dbReference>
<dbReference type="GO" id="GO:0031177">
    <property type="term" value="F:phosphopantetheine binding"/>
    <property type="evidence" value="ECO:0007669"/>
    <property type="project" value="InterPro"/>
</dbReference>
<dbReference type="GO" id="GO:0009245">
    <property type="term" value="P:lipid A biosynthetic process"/>
    <property type="evidence" value="ECO:0007669"/>
    <property type="project" value="TreeGrafter"/>
</dbReference>
<dbReference type="FunFam" id="1.10.1200.10:FF:000001">
    <property type="entry name" value="Acyl carrier protein"/>
    <property type="match status" value="1"/>
</dbReference>
<dbReference type="Gene3D" id="1.10.1200.10">
    <property type="entry name" value="ACP-like"/>
    <property type="match status" value="1"/>
</dbReference>
<dbReference type="HAMAP" id="MF_01217">
    <property type="entry name" value="Acyl_carrier"/>
    <property type="match status" value="1"/>
</dbReference>
<dbReference type="InterPro" id="IPR003231">
    <property type="entry name" value="ACP"/>
</dbReference>
<dbReference type="InterPro" id="IPR036736">
    <property type="entry name" value="ACP-like_sf"/>
</dbReference>
<dbReference type="InterPro" id="IPR020806">
    <property type="entry name" value="PKS_PP-bd"/>
</dbReference>
<dbReference type="InterPro" id="IPR009081">
    <property type="entry name" value="PP-bd_ACP"/>
</dbReference>
<dbReference type="InterPro" id="IPR006162">
    <property type="entry name" value="Ppantetheine_attach_site"/>
</dbReference>
<dbReference type="NCBIfam" id="TIGR00517">
    <property type="entry name" value="acyl_carrier"/>
    <property type="match status" value="1"/>
</dbReference>
<dbReference type="NCBIfam" id="NF002148">
    <property type="entry name" value="PRK00982.1-2"/>
    <property type="match status" value="1"/>
</dbReference>
<dbReference type="NCBIfam" id="NF002149">
    <property type="entry name" value="PRK00982.1-3"/>
    <property type="match status" value="1"/>
</dbReference>
<dbReference type="NCBIfam" id="NF002150">
    <property type="entry name" value="PRK00982.1-4"/>
    <property type="match status" value="1"/>
</dbReference>
<dbReference type="NCBIfam" id="NF002151">
    <property type="entry name" value="PRK00982.1-5"/>
    <property type="match status" value="1"/>
</dbReference>
<dbReference type="PANTHER" id="PTHR20863">
    <property type="entry name" value="ACYL CARRIER PROTEIN"/>
    <property type="match status" value="1"/>
</dbReference>
<dbReference type="PANTHER" id="PTHR20863:SF76">
    <property type="entry name" value="CARRIER DOMAIN-CONTAINING PROTEIN"/>
    <property type="match status" value="1"/>
</dbReference>
<dbReference type="Pfam" id="PF00550">
    <property type="entry name" value="PP-binding"/>
    <property type="match status" value="1"/>
</dbReference>
<dbReference type="SMART" id="SM00823">
    <property type="entry name" value="PKS_PP"/>
    <property type="match status" value="1"/>
</dbReference>
<dbReference type="SUPFAM" id="SSF47336">
    <property type="entry name" value="ACP-like"/>
    <property type="match status" value="1"/>
</dbReference>
<dbReference type="PROSITE" id="PS50075">
    <property type="entry name" value="CARRIER"/>
    <property type="match status" value="1"/>
</dbReference>
<dbReference type="PROSITE" id="PS00012">
    <property type="entry name" value="PHOSPHOPANTETHEINE"/>
    <property type="match status" value="1"/>
</dbReference>
<keyword id="KW-0963">Cytoplasm</keyword>
<keyword id="KW-0275">Fatty acid biosynthesis</keyword>
<keyword id="KW-0276">Fatty acid metabolism</keyword>
<keyword id="KW-0444">Lipid biosynthesis</keyword>
<keyword id="KW-0443">Lipid metabolism</keyword>
<keyword id="KW-0596">Phosphopantetheine</keyword>
<keyword id="KW-0597">Phosphoprotein</keyword>
<evidence type="ECO:0000255" key="1">
    <source>
        <dbReference type="HAMAP-Rule" id="MF_01217"/>
    </source>
</evidence>
<evidence type="ECO:0000255" key="2">
    <source>
        <dbReference type="PROSITE-ProRule" id="PRU00258"/>
    </source>
</evidence>
<protein>
    <recommendedName>
        <fullName evidence="1">Acyl carrier protein</fullName>
        <shortName evidence="1">ACP</shortName>
    </recommendedName>
</protein>
<feature type="chain" id="PRO_1000066638" description="Acyl carrier protein">
    <location>
        <begin position="1"/>
        <end position="78"/>
    </location>
</feature>
<feature type="domain" description="Carrier" evidence="2">
    <location>
        <begin position="2"/>
        <end position="77"/>
    </location>
</feature>
<feature type="modified residue" description="O-(pantetheine 4'-phosphoryl)serine" evidence="2">
    <location>
        <position position="37"/>
    </location>
</feature>
<organism>
    <name type="scientific">Chelativorans sp. (strain BNC1)</name>
    <dbReference type="NCBI Taxonomy" id="266779"/>
    <lineage>
        <taxon>Bacteria</taxon>
        <taxon>Pseudomonadati</taxon>
        <taxon>Pseudomonadota</taxon>
        <taxon>Alphaproteobacteria</taxon>
        <taxon>Hyphomicrobiales</taxon>
        <taxon>Phyllobacteriaceae</taxon>
        <taxon>Chelativorans</taxon>
    </lineage>
</organism>
<gene>
    <name evidence="1" type="primary">acpP</name>
    <name type="ordered locus">Meso_1767</name>
</gene>
<accession>Q11HG4</accession>
<reference key="1">
    <citation type="submission" date="2006-06" db="EMBL/GenBank/DDBJ databases">
        <title>Complete sequence of chromosome of Mesorhizobium sp. BNC1.</title>
        <authorList>
            <consortium name="US DOE Joint Genome Institute"/>
            <person name="Copeland A."/>
            <person name="Lucas S."/>
            <person name="Lapidus A."/>
            <person name="Barry K."/>
            <person name="Detter J.C."/>
            <person name="Glavina del Rio T."/>
            <person name="Hammon N."/>
            <person name="Israni S."/>
            <person name="Dalin E."/>
            <person name="Tice H."/>
            <person name="Pitluck S."/>
            <person name="Chertkov O."/>
            <person name="Brettin T."/>
            <person name="Bruce D."/>
            <person name="Han C."/>
            <person name="Tapia R."/>
            <person name="Gilna P."/>
            <person name="Schmutz J."/>
            <person name="Larimer F."/>
            <person name="Land M."/>
            <person name="Hauser L."/>
            <person name="Kyrpides N."/>
            <person name="Mikhailova N."/>
            <person name="Richardson P."/>
        </authorList>
    </citation>
    <scope>NUCLEOTIDE SEQUENCE [LARGE SCALE GENOMIC DNA]</scope>
    <source>
        <strain>BNC1</strain>
    </source>
</reference>
<proteinExistence type="inferred from homology"/>